<sequence length="482" mass="55803">MDYHMDYIPNEVISHQGERFVDKYVDRKILKNKKSLLVIISLSVLSVVGFILFYFTPNFRKSDLFKNSSVENNNDDYIINSLLKSPNGKKFIVSKIDEALSFYDNKMKDINKNNNNNTSSDFKGLSLFKENKPSNNFIHNENYFINVFDHKFLMNNVEHINQFYTFIKTNNKQYNSPNEMKERFQVFLQNAHKVKMHNNNKKSLYKKELNRFADLTYHEFKSKYLTLRSSKPLKNSKYLLDQINYDAVIKKYKGNENFDHAAYDWRLHSGVTPVKDQKNCGSCWAFSSIGSVESQYAIRKNKLITLSEQELVDCSFKNYGCNGGLINNAFEDMIELGGICTDDDYPYVSDAPNLCNIDRCTEKYGIKNYLSVPDNKLKEALRFLGPISISIAVSDDFPFYKEGIFDGECGDELNHAVMLVGFGMKEIVNPLTKKGEKHYYYIIKNSWGQQWGERGFINIETDESGLMRKCGLGTDAFIPLIE</sequence>
<proteinExistence type="evidence at protein level"/>
<name>FPC2B_PLAF7</name>
<accession>Q8I6U5</accession>
<accession>Q56CY9</accession>
<comment type="function">
    <text evidence="7">Cysteine protease which cleaves native host hemoglobin in the food vacuole during the asexual blood stage (PubMed:16337629). Preferentially cleaves substrates which have a leucine at the P2 position (PubMed:16337629).</text>
</comment>
<comment type="biophysicochemical properties">
    <phDependence>
        <text evidence="7">Optimum pH is 4.0-5.5 for host hemoglobin.</text>
    </phDependence>
</comment>
<comment type="subunit">
    <text evidence="9">Component of the hemozoin formation complex (HFC) composed of falcipains FP2A and/or FP2B, plasmepsins PMII, PMIII/HAP and PMIV, heme detoxifying protein HDP and falcilysin FLN (PubMed:23471987). The HFC complex is involved in hemoglobin degradation and detoxification of heme in the food vacuole during the asexual blood stage (PubMed:23471987).</text>
</comment>
<comment type="subcellular location">
    <subcellularLocation>
        <location evidence="9">Vacuole</location>
    </subcellularLocation>
    <subcellularLocation>
        <location evidence="1">Membrane</location>
        <topology evidence="11">Single-pass type II membrane protein</topology>
    </subcellularLocation>
    <text evidence="9">In trophozoites, localizes to the digestive (or food) vacuole, an acidic vacuole where host hemoglobin is digested.</text>
</comment>
<comment type="developmental stage">
    <text evidence="6">During the asexual blood stage, expressed in schizonts.</text>
</comment>
<comment type="disruption phenotype">
    <text evidence="8">Normal growth and morphology during the asexual blood stage.</text>
</comment>
<comment type="similarity">
    <text evidence="4 5">Belongs to the peptidase C1 family.</text>
</comment>
<dbReference type="EC" id="3.4.22.-" evidence="7"/>
<dbReference type="EMBL" id="AY966007">
    <property type="protein sequence ID" value="AAX77225.1"/>
    <property type="molecule type" value="Genomic_DNA"/>
</dbReference>
<dbReference type="EMBL" id="LN999945">
    <property type="protein sequence ID" value="CZT98813.1"/>
    <property type="molecule type" value="Genomic_DNA"/>
</dbReference>
<dbReference type="RefSeq" id="XP_001347832.1">
    <property type="nucleotide sequence ID" value="XM_001347796.1"/>
</dbReference>
<dbReference type="SMR" id="Q8I6U5"/>
<dbReference type="IntAct" id="Q8I6U5">
    <property type="interactions" value="4"/>
</dbReference>
<dbReference type="STRING" id="36329.Q8I6U5"/>
<dbReference type="MEROPS" id="C01.046"/>
<dbReference type="PaxDb" id="5833-PF11_0161"/>
<dbReference type="EnsemblProtists" id="CZT98813">
    <property type="protein sequence ID" value="CZT98813"/>
    <property type="gene ID" value="PF3D7_1115300"/>
</dbReference>
<dbReference type="GeneID" id="810708"/>
<dbReference type="KEGG" id="pfa:PF3D7_1115300"/>
<dbReference type="VEuPathDB" id="PlasmoDB:PF3D7_1115300"/>
<dbReference type="VEuPathDB" id="PlasmoDB:Pf7G8-2_000338100"/>
<dbReference type="VEuPathDB" id="PlasmoDB:Pf7G8_110018900"/>
<dbReference type="VEuPathDB" id="PlasmoDB:PfCD01_110020700"/>
<dbReference type="VEuPathDB" id="PlasmoDB:PfDd2_110018300"/>
<dbReference type="VEuPathDB" id="PlasmoDB:PfGA01_140063400"/>
<dbReference type="VEuPathDB" id="PlasmoDB:PfGB4_140064100"/>
<dbReference type="VEuPathDB" id="PlasmoDB:PfGN01_110019800"/>
<dbReference type="VEuPathDB" id="PlasmoDB:PfHB3_110018400"/>
<dbReference type="VEuPathDB" id="PlasmoDB:PfIT_110019600"/>
<dbReference type="VEuPathDB" id="PlasmoDB:PfKE01_110019800"/>
<dbReference type="VEuPathDB" id="PlasmoDB:PfKH01_110019400"/>
<dbReference type="VEuPathDB" id="PlasmoDB:PfKH02_110020300"/>
<dbReference type="VEuPathDB" id="PlasmoDB:PfML01_110020100"/>
<dbReference type="VEuPathDB" id="PlasmoDB:PfNF135_110018500"/>
<dbReference type="VEuPathDB" id="PlasmoDB:PfNF166_110018700"/>
<dbReference type="VEuPathDB" id="PlasmoDB:PfNF54_110019600"/>
<dbReference type="VEuPathDB" id="PlasmoDB:PfSD01_110017900"/>
<dbReference type="VEuPathDB" id="PlasmoDB:PfSN01_110018400"/>
<dbReference type="VEuPathDB" id="PlasmoDB:PfTG01_110019700"/>
<dbReference type="HOGENOM" id="CLU_012184_1_2_1"/>
<dbReference type="InParanoid" id="Q8I6U5"/>
<dbReference type="OMA" id="CDIDRCK"/>
<dbReference type="OrthoDB" id="190265at2759"/>
<dbReference type="PhylomeDB" id="Q8I6U5"/>
<dbReference type="BioCyc" id="MetaCyc:MONOMER-15379"/>
<dbReference type="Reactome" id="R-PFA-2132295">
    <property type="pathway name" value="MHC class II antigen presentation"/>
</dbReference>
<dbReference type="Reactome" id="R-PFA-6798695">
    <property type="pathway name" value="Neutrophil degranulation"/>
</dbReference>
<dbReference type="Proteomes" id="UP000001450">
    <property type="component" value="Chromosome 11"/>
</dbReference>
<dbReference type="GO" id="GO:0005615">
    <property type="term" value="C:extracellular space"/>
    <property type="evidence" value="ECO:0000318"/>
    <property type="project" value="GO_Central"/>
</dbReference>
<dbReference type="GO" id="GO:0020020">
    <property type="term" value="C:food vacuole"/>
    <property type="evidence" value="ECO:0000304"/>
    <property type="project" value="GeneDB"/>
</dbReference>
<dbReference type="GO" id="GO:0005764">
    <property type="term" value="C:lysosome"/>
    <property type="evidence" value="ECO:0000318"/>
    <property type="project" value="GO_Central"/>
</dbReference>
<dbReference type="GO" id="GO:0016020">
    <property type="term" value="C:membrane"/>
    <property type="evidence" value="ECO:0007669"/>
    <property type="project" value="UniProtKB-SubCell"/>
</dbReference>
<dbReference type="GO" id="GO:0004197">
    <property type="term" value="F:cysteine-type endopeptidase activity"/>
    <property type="evidence" value="ECO:0000318"/>
    <property type="project" value="GO_Central"/>
</dbReference>
<dbReference type="GO" id="GO:0051603">
    <property type="term" value="P:proteolysis involved in protein catabolic process"/>
    <property type="evidence" value="ECO:0000318"/>
    <property type="project" value="GO_Central"/>
</dbReference>
<dbReference type="CDD" id="cd02248">
    <property type="entry name" value="Peptidase_C1A"/>
    <property type="match status" value="1"/>
</dbReference>
<dbReference type="FunFam" id="3.90.70.10:FF:000086">
    <property type="entry name" value="Cysteine proteinase falcipain 2a"/>
    <property type="match status" value="1"/>
</dbReference>
<dbReference type="Gene3D" id="1.10.287.2250">
    <property type="match status" value="1"/>
</dbReference>
<dbReference type="Gene3D" id="3.90.70.10">
    <property type="entry name" value="Cysteine proteinases"/>
    <property type="match status" value="1"/>
</dbReference>
<dbReference type="InterPro" id="IPR038765">
    <property type="entry name" value="Papain-like_cys_pep_sf"/>
</dbReference>
<dbReference type="InterPro" id="IPR000169">
    <property type="entry name" value="Pept_cys_AS"/>
</dbReference>
<dbReference type="InterPro" id="IPR025660">
    <property type="entry name" value="Pept_his_AS"/>
</dbReference>
<dbReference type="InterPro" id="IPR013128">
    <property type="entry name" value="Peptidase_C1A"/>
</dbReference>
<dbReference type="InterPro" id="IPR000668">
    <property type="entry name" value="Peptidase_C1A_C"/>
</dbReference>
<dbReference type="InterPro" id="IPR039417">
    <property type="entry name" value="Peptidase_C1A_papain-like"/>
</dbReference>
<dbReference type="InterPro" id="IPR013201">
    <property type="entry name" value="Prot_inhib_I29"/>
</dbReference>
<dbReference type="PANTHER" id="PTHR12411">
    <property type="entry name" value="CYSTEINE PROTEASE FAMILY C1-RELATED"/>
    <property type="match status" value="1"/>
</dbReference>
<dbReference type="Pfam" id="PF08246">
    <property type="entry name" value="Inhibitor_I29"/>
    <property type="match status" value="1"/>
</dbReference>
<dbReference type="Pfam" id="PF00112">
    <property type="entry name" value="Peptidase_C1"/>
    <property type="match status" value="1"/>
</dbReference>
<dbReference type="PRINTS" id="PR00705">
    <property type="entry name" value="PAPAIN"/>
</dbReference>
<dbReference type="SMART" id="SM00848">
    <property type="entry name" value="Inhibitor_I29"/>
    <property type="match status" value="1"/>
</dbReference>
<dbReference type="SMART" id="SM00645">
    <property type="entry name" value="Pept_C1"/>
    <property type="match status" value="1"/>
</dbReference>
<dbReference type="SUPFAM" id="SSF54001">
    <property type="entry name" value="Cysteine proteinases"/>
    <property type="match status" value="1"/>
</dbReference>
<dbReference type="PROSITE" id="PS00139">
    <property type="entry name" value="THIOL_PROTEASE_CYS"/>
    <property type="match status" value="1"/>
</dbReference>
<dbReference type="PROSITE" id="PS00639">
    <property type="entry name" value="THIOL_PROTEASE_HIS"/>
    <property type="match status" value="1"/>
</dbReference>
<organism evidence="14">
    <name type="scientific">Plasmodium falciparum (isolate 3D7)</name>
    <dbReference type="NCBI Taxonomy" id="36329"/>
    <lineage>
        <taxon>Eukaryota</taxon>
        <taxon>Sar</taxon>
        <taxon>Alveolata</taxon>
        <taxon>Apicomplexa</taxon>
        <taxon>Aconoidasida</taxon>
        <taxon>Haemosporida</taxon>
        <taxon>Plasmodiidae</taxon>
        <taxon>Plasmodium</taxon>
        <taxon>Plasmodium (Laverania)</taxon>
    </lineage>
</organism>
<protein>
    <recommendedName>
        <fullName evidence="11">Falcipain-2b</fullName>
        <ecNumber evidence="7">3.4.22.-</ecNumber>
    </recommendedName>
    <alternativeName>
        <fullName evidence="11">Cysteine proteinase falcipain-2b</fullName>
    </alternativeName>
    <alternativeName>
        <fullName evidence="10">Falcipain-2'</fullName>
    </alternativeName>
</protein>
<evidence type="ECO:0000250" key="1">
    <source>
        <dbReference type="UniProtKB" id="Q8I6U4"/>
    </source>
</evidence>
<evidence type="ECO:0000255" key="2"/>
<evidence type="ECO:0000255" key="3">
    <source>
        <dbReference type="PROSITE-ProRule" id="PRU00498"/>
    </source>
</evidence>
<evidence type="ECO:0000255" key="4">
    <source>
        <dbReference type="PROSITE-ProRule" id="PRU10088"/>
    </source>
</evidence>
<evidence type="ECO:0000255" key="5">
    <source>
        <dbReference type="PROSITE-ProRule" id="PRU10089"/>
    </source>
</evidence>
<evidence type="ECO:0000269" key="6">
    <source>
    </source>
</evidence>
<evidence type="ECO:0000269" key="7">
    <source>
    </source>
</evidence>
<evidence type="ECO:0000269" key="8">
    <source>
    </source>
</evidence>
<evidence type="ECO:0000269" key="9">
    <source>
    </source>
</evidence>
<evidence type="ECO:0000303" key="10">
    <source>
    </source>
</evidence>
<evidence type="ECO:0000305" key="11"/>
<evidence type="ECO:0000312" key="12">
    <source>
        <dbReference type="EMBL" id="AAX77225.1"/>
    </source>
</evidence>
<evidence type="ECO:0000312" key="13">
    <source>
        <dbReference type="EMBL" id="CZT98813.1"/>
    </source>
</evidence>
<evidence type="ECO:0000312" key="14">
    <source>
        <dbReference type="Proteomes" id="UP000001450"/>
    </source>
</evidence>
<gene>
    <name evidence="11" type="primary">FP2B</name>
    <name evidence="10" type="synonym">FP2'</name>
    <name evidence="13" type="ORF">PF3D7_1115300</name>
</gene>
<reference evidence="12" key="1">
    <citation type="journal article" date="2006" name="Exp. Parasitol.">
        <title>Plasmodium falciparum: biochemical characterization of the cysteine protease falcipain-2'.</title>
        <authorList>
            <person name="Singh N."/>
            <person name="Sijwali P.S."/>
            <person name="Pandey K.C."/>
            <person name="Rosenthal P.J."/>
        </authorList>
    </citation>
    <scope>NUCLEOTIDE SEQUENCE [GENOMIC DNA]</scope>
    <scope>FUNCTION</scope>
    <scope>CATALYTIC ACTIVITY</scope>
    <scope>BIOPHYSICOCHEMICAL PROPERTIES</scope>
    <source>
        <strain evidence="12">3D7</strain>
    </source>
</reference>
<reference evidence="14" key="2">
    <citation type="journal article" date="2002" name="Nature">
        <title>Genome sequence of the human malaria parasite Plasmodium falciparum.</title>
        <authorList>
            <person name="Gardner M.J."/>
            <person name="Hall N."/>
            <person name="Fung E."/>
            <person name="White O."/>
            <person name="Berriman M."/>
            <person name="Hyman R.W."/>
            <person name="Carlton J.M."/>
            <person name="Pain A."/>
            <person name="Nelson K.E."/>
            <person name="Bowman S."/>
            <person name="Paulsen I.T."/>
            <person name="James K.D."/>
            <person name="Eisen J.A."/>
            <person name="Rutherford K.M."/>
            <person name="Salzberg S.L."/>
            <person name="Craig A."/>
            <person name="Kyes S."/>
            <person name="Chan M.-S."/>
            <person name="Nene V."/>
            <person name="Shallom S.J."/>
            <person name="Suh B."/>
            <person name="Peterson J."/>
            <person name="Angiuoli S."/>
            <person name="Pertea M."/>
            <person name="Allen J."/>
            <person name="Selengut J."/>
            <person name="Haft D."/>
            <person name="Mather M.W."/>
            <person name="Vaidya A.B."/>
            <person name="Martin D.M.A."/>
            <person name="Fairlamb A.H."/>
            <person name="Fraunholz M.J."/>
            <person name="Roos D.S."/>
            <person name="Ralph S.A."/>
            <person name="McFadden G.I."/>
            <person name="Cummings L.M."/>
            <person name="Subramanian G.M."/>
            <person name="Mungall C."/>
            <person name="Venter J.C."/>
            <person name="Carucci D.J."/>
            <person name="Hoffman S.L."/>
            <person name="Newbold C."/>
            <person name="Davis R.W."/>
            <person name="Fraser C.M."/>
            <person name="Barrell B.G."/>
        </authorList>
    </citation>
    <scope>NUCLEOTIDE SEQUENCE [LARGE SCALE GENOMIC DNA]</scope>
    <source>
        <strain evidence="14">3D7</strain>
    </source>
</reference>
<reference evidence="11" key="3">
    <citation type="journal article" date="2004" name="Proc. Natl. Acad. Sci. U.S.A.">
        <title>Gene disruption confirms a critical role for the cysteine protease falcipain-2 in hemoglobin hydrolysis by Plasmodium falciparum.</title>
        <authorList>
            <person name="Sijwali P.S."/>
            <person name="Rosenthal P.J."/>
        </authorList>
    </citation>
    <scope>DEVELOPMENTAL STAGE</scope>
</reference>
<reference evidence="11" key="4">
    <citation type="journal article" date="2006" name="Mol. Biochem. Parasitol.">
        <title>Gene disruptions demonstrate independent roles for the four falcipain cysteine proteases of Plasmodium falciparum.</title>
        <authorList>
            <person name="Sijwali P.S."/>
            <person name="Koo J."/>
            <person name="Singh N."/>
            <person name="Rosenthal P.J."/>
        </authorList>
    </citation>
    <scope>DISRUPTION PHENOTYPE</scope>
</reference>
<reference evidence="11" key="5">
    <citation type="journal article" date="2013" name="Proc. Natl. Acad. Sci. U.S.A.">
        <title>Protein complex directs hemoglobin-to-hemozoin formation in Plasmodium falciparum.</title>
        <authorList>
            <person name="Chugh M."/>
            <person name="Sundararaman V."/>
            <person name="Kumar S."/>
            <person name="Reddy V.S."/>
            <person name="Siddiqui W.A."/>
            <person name="Stuart K.D."/>
            <person name="Malhotra P."/>
        </authorList>
    </citation>
    <scope>IDENTIFICATION IN THE HEMOZOIN FORMATION COMPLEX</scope>
    <scope>SUBCELLULAR LOCATION</scope>
    <scope>IDENTIFICATION BY MASS SPECTROMETRY</scope>
</reference>
<keyword id="KW-1015">Disulfide bond</keyword>
<keyword id="KW-0325">Glycoprotein</keyword>
<keyword id="KW-0378">Hydrolase</keyword>
<keyword id="KW-0472">Membrane</keyword>
<keyword id="KW-0645">Protease</keyword>
<keyword id="KW-1185">Reference proteome</keyword>
<keyword id="KW-0735">Signal-anchor</keyword>
<keyword id="KW-0788">Thiol protease</keyword>
<keyword id="KW-0812">Transmembrane</keyword>
<keyword id="KW-1133">Transmembrane helix</keyword>
<keyword id="KW-0926">Vacuole</keyword>
<keyword id="KW-0865">Zymogen</keyword>
<feature type="propeptide" id="PRO_0000459158" description="Activation peptide" evidence="1">
    <location>
        <begin position="1"/>
        <end position="241"/>
    </location>
</feature>
<feature type="chain" id="PRO_0000459159" description="Falcipain-2b">
    <location>
        <begin position="242"/>
        <end position="482"/>
    </location>
</feature>
<feature type="topological domain" description="Cytoplasmic" evidence="11">
    <location>
        <begin position="1"/>
        <end position="35"/>
    </location>
</feature>
<feature type="transmembrane region" description="Helical; Signal-anchor for type II membrane protein" evidence="2">
    <location>
        <begin position="36"/>
        <end position="56"/>
    </location>
</feature>
<feature type="topological domain" description="Lumenal" evidence="11">
    <location>
        <begin position="57"/>
        <end position="482"/>
    </location>
</feature>
<feature type="short sequence motif" description="Bipartite vacuolar targeting signal 1" evidence="1">
    <location>
        <begin position="16"/>
        <end position="25"/>
    </location>
</feature>
<feature type="short sequence motif" description="Bipartite vacuolar targeting signal 2" evidence="1">
    <location>
        <begin position="84"/>
        <end position="105"/>
    </location>
</feature>
<feature type="short sequence motif" description="Nose motif; required for the correct folding of the mature form" evidence="1">
    <location>
        <begin position="242"/>
        <end position="258"/>
    </location>
</feature>
<feature type="short sequence motif" description="Arm motif; binds to host hemoglobin and required for the inhibitory interaction between the propeptide and the catalytic domain" evidence="1">
    <location>
        <begin position="426"/>
        <end position="435"/>
    </location>
</feature>
<feature type="active site" evidence="4">
    <location>
        <position position="283"/>
    </location>
</feature>
<feature type="active site" evidence="5">
    <location>
        <position position="415"/>
    </location>
</feature>
<feature type="glycosylation site" description="N-linked (GlcNAc...) asparagine" evidence="3">
    <location>
        <position position="67"/>
    </location>
</feature>
<feature type="glycosylation site" description="N-linked (GlcNAc...) asparagine" evidence="3">
    <location>
        <position position="117"/>
    </location>
</feature>
<feature type="disulfide bond" evidence="1">
    <location>
        <begin position="280"/>
        <end position="321"/>
    </location>
</feature>
<feature type="disulfide bond" evidence="1">
    <location>
        <begin position="314"/>
        <end position="355"/>
    </location>
</feature>
<feature type="disulfide bond" evidence="1">
    <location>
        <begin position="340"/>
        <end position="360"/>
    </location>
</feature>
<feature type="disulfide bond" evidence="1">
    <location>
        <begin position="409"/>
        <end position="470"/>
    </location>
</feature>